<evidence type="ECO:0000255" key="1">
    <source>
        <dbReference type="HAMAP-Rule" id="MF_00198"/>
    </source>
</evidence>
<feature type="chain" id="PRO_0000156465" description="Polyamine aminopropyltransferase 1">
    <location>
        <begin position="1"/>
        <end position="275"/>
    </location>
</feature>
<feature type="domain" description="PABS" evidence="1">
    <location>
        <begin position="2"/>
        <end position="235"/>
    </location>
</feature>
<feature type="active site" description="Proton acceptor" evidence="1">
    <location>
        <position position="155"/>
    </location>
</feature>
<feature type="binding site" evidence="1">
    <location>
        <position position="31"/>
    </location>
    <ligand>
        <name>S-methyl-5'-thioadenosine</name>
        <dbReference type="ChEBI" id="CHEBI:17509"/>
    </ligand>
</feature>
<feature type="binding site" evidence="1">
    <location>
        <position position="62"/>
    </location>
    <ligand>
        <name>spermidine</name>
        <dbReference type="ChEBI" id="CHEBI:57834"/>
    </ligand>
</feature>
<feature type="binding site" evidence="1">
    <location>
        <position position="86"/>
    </location>
    <ligand>
        <name>spermidine</name>
        <dbReference type="ChEBI" id="CHEBI:57834"/>
    </ligand>
</feature>
<feature type="binding site" evidence="1">
    <location>
        <position position="106"/>
    </location>
    <ligand>
        <name>S-methyl-5'-thioadenosine</name>
        <dbReference type="ChEBI" id="CHEBI:17509"/>
    </ligand>
</feature>
<feature type="binding site" evidence="1">
    <location>
        <begin position="137"/>
        <end position="138"/>
    </location>
    <ligand>
        <name>S-methyl-5'-thioadenosine</name>
        <dbReference type="ChEBI" id="CHEBI:17509"/>
    </ligand>
</feature>
<feature type="binding site" evidence="1">
    <location>
        <begin position="155"/>
        <end position="158"/>
    </location>
    <ligand>
        <name>spermidine</name>
        <dbReference type="ChEBI" id="CHEBI:57834"/>
    </ligand>
</feature>
<feature type="binding site" evidence="1">
    <location>
        <position position="162"/>
    </location>
    <ligand>
        <name>S-methyl-5'-thioadenosine</name>
        <dbReference type="ChEBI" id="CHEBI:17509"/>
    </ligand>
</feature>
<accession>Q81JT0</accession>
<accession>Q6HQD0</accession>
<protein>
    <recommendedName>
        <fullName evidence="1">Polyamine aminopropyltransferase 1</fullName>
    </recommendedName>
    <alternativeName>
        <fullName evidence="1">Putrescine aminopropyltransferase 1</fullName>
        <shortName evidence="1">PAPT 1</shortName>
    </alternativeName>
    <alternativeName>
        <fullName evidence="1">Spermidine synthase 1</fullName>
        <shortName evidence="1">SPDS 1</shortName>
        <shortName evidence="1">SPDSY 1</shortName>
        <ecNumber evidence="1">2.5.1.16</ecNumber>
    </alternativeName>
</protein>
<gene>
    <name evidence="1" type="primary">speE1</name>
    <name type="synonym">speE</name>
    <name type="ordered locus">BA_5619</name>
    <name type="ordered locus">GBAA_5619</name>
    <name type="ordered locus">BAS5219</name>
</gene>
<comment type="function">
    <text evidence="1">Catalyzes the irreversible transfer of a propylamine group from the amino donor S-adenosylmethioninamine (decarboxy-AdoMet) to putrescine (1,4-diaminobutane) to yield spermidine.</text>
</comment>
<comment type="catalytic activity">
    <reaction evidence="1">
        <text>S-adenosyl 3-(methylsulfanyl)propylamine + putrescine = S-methyl-5'-thioadenosine + spermidine + H(+)</text>
        <dbReference type="Rhea" id="RHEA:12721"/>
        <dbReference type="ChEBI" id="CHEBI:15378"/>
        <dbReference type="ChEBI" id="CHEBI:17509"/>
        <dbReference type="ChEBI" id="CHEBI:57443"/>
        <dbReference type="ChEBI" id="CHEBI:57834"/>
        <dbReference type="ChEBI" id="CHEBI:326268"/>
        <dbReference type="EC" id="2.5.1.16"/>
    </reaction>
</comment>
<comment type="pathway">
    <text evidence="1">Amine and polyamine biosynthesis; spermidine biosynthesis; spermidine from putrescine: step 1/1.</text>
</comment>
<comment type="subunit">
    <text evidence="1">Homodimer or homotetramer.</text>
</comment>
<comment type="subcellular location">
    <subcellularLocation>
        <location evidence="1">Cytoplasm</location>
    </subcellularLocation>
</comment>
<comment type="similarity">
    <text evidence="1">Belongs to the spermidine/spermine synthase family.</text>
</comment>
<dbReference type="EC" id="2.5.1.16" evidence="1"/>
<dbReference type="EMBL" id="AE016879">
    <property type="protein sequence ID" value="AAP29256.1"/>
    <property type="molecule type" value="Genomic_DNA"/>
</dbReference>
<dbReference type="EMBL" id="AE017334">
    <property type="protein sequence ID" value="AAT70165.1"/>
    <property type="molecule type" value="Genomic_DNA"/>
</dbReference>
<dbReference type="EMBL" id="AE017225">
    <property type="protein sequence ID" value="AAT57508.1"/>
    <property type="molecule type" value="Genomic_DNA"/>
</dbReference>
<dbReference type="RefSeq" id="NP_847770.1">
    <property type="nucleotide sequence ID" value="NC_003997.3"/>
</dbReference>
<dbReference type="RefSeq" id="WP_000424696.1">
    <property type="nucleotide sequence ID" value="NZ_WXXJ01000017.1"/>
</dbReference>
<dbReference type="RefSeq" id="YP_031458.1">
    <property type="nucleotide sequence ID" value="NC_005945.1"/>
</dbReference>
<dbReference type="SMR" id="Q81JT0"/>
<dbReference type="STRING" id="261594.GBAA_5619"/>
<dbReference type="DNASU" id="1085326"/>
<dbReference type="GeneID" id="93005753"/>
<dbReference type="KEGG" id="ban:BA_5619"/>
<dbReference type="KEGG" id="bar:GBAA_5619"/>
<dbReference type="KEGG" id="bat:BAS5219"/>
<dbReference type="PATRIC" id="fig|198094.11.peg.5576"/>
<dbReference type="eggNOG" id="COG0421">
    <property type="taxonomic scope" value="Bacteria"/>
</dbReference>
<dbReference type="HOGENOM" id="CLU_048199_0_0_9"/>
<dbReference type="OMA" id="FLYHEMM"/>
<dbReference type="OrthoDB" id="9793120at2"/>
<dbReference type="UniPathway" id="UPA00248">
    <property type="reaction ID" value="UER00314"/>
</dbReference>
<dbReference type="Proteomes" id="UP000000427">
    <property type="component" value="Chromosome"/>
</dbReference>
<dbReference type="Proteomes" id="UP000000594">
    <property type="component" value="Chromosome"/>
</dbReference>
<dbReference type="GO" id="GO:0005829">
    <property type="term" value="C:cytosol"/>
    <property type="evidence" value="ECO:0007669"/>
    <property type="project" value="TreeGrafter"/>
</dbReference>
<dbReference type="GO" id="GO:0004766">
    <property type="term" value="F:spermidine synthase activity"/>
    <property type="evidence" value="ECO:0007669"/>
    <property type="project" value="UniProtKB-UniRule"/>
</dbReference>
<dbReference type="GO" id="GO:0008295">
    <property type="term" value="P:spermidine biosynthetic process"/>
    <property type="evidence" value="ECO:0007669"/>
    <property type="project" value="UniProtKB-UniRule"/>
</dbReference>
<dbReference type="CDD" id="cd02440">
    <property type="entry name" value="AdoMet_MTases"/>
    <property type="match status" value="1"/>
</dbReference>
<dbReference type="FunFam" id="2.30.140.10:FF:000004">
    <property type="entry name" value="Polyamine aminopropyltransferase"/>
    <property type="match status" value="1"/>
</dbReference>
<dbReference type="FunFam" id="3.40.50.150:FF:000056">
    <property type="entry name" value="Polyamine aminopropyltransferase"/>
    <property type="match status" value="1"/>
</dbReference>
<dbReference type="Gene3D" id="2.30.140.10">
    <property type="entry name" value="Spermidine synthase, tetramerisation domain"/>
    <property type="match status" value="1"/>
</dbReference>
<dbReference type="Gene3D" id="3.40.50.150">
    <property type="entry name" value="Vaccinia Virus protein VP39"/>
    <property type="match status" value="1"/>
</dbReference>
<dbReference type="HAMAP" id="MF_00198">
    <property type="entry name" value="Spermidine_synth"/>
    <property type="match status" value="1"/>
</dbReference>
<dbReference type="InterPro" id="IPR030374">
    <property type="entry name" value="PABS"/>
</dbReference>
<dbReference type="InterPro" id="IPR030373">
    <property type="entry name" value="PABS_CS"/>
</dbReference>
<dbReference type="InterPro" id="IPR029063">
    <property type="entry name" value="SAM-dependent_MTases_sf"/>
</dbReference>
<dbReference type="InterPro" id="IPR001045">
    <property type="entry name" value="Spermi_synthase"/>
</dbReference>
<dbReference type="InterPro" id="IPR035246">
    <property type="entry name" value="Spermidine_synt_N"/>
</dbReference>
<dbReference type="InterPro" id="IPR037163">
    <property type="entry name" value="Spermidine_synt_N_sf"/>
</dbReference>
<dbReference type="NCBIfam" id="NF037959">
    <property type="entry name" value="MFS_SpdSyn"/>
    <property type="match status" value="1"/>
</dbReference>
<dbReference type="NCBIfam" id="NF002010">
    <property type="entry name" value="PRK00811.1"/>
    <property type="match status" value="1"/>
</dbReference>
<dbReference type="NCBIfam" id="TIGR00417">
    <property type="entry name" value="speE"/>
    <property type="match status" value="1"/>
</dbReference>
<dbReference type="PANTHER" id="PTHR11558:SF11">
    <property type="entry name" value="SPERMIDINE SYNTHASE"/>
    <property type="match status" value="1"/>
</dbReference>
<dbReference type="PANTHER" id="PTHR11558">
    <property type="entry name" value="SPERMIDINE/SPERMINE SYNTHASE"/>
    <property type="match status" value="1"/>
</dbReference>
<dbReference type="Pfam" id="PF17284">
    <property type="entry name" value="Spermine_synt_N"/>
    <property type="match status" value="1"/>
</dbReference>
<dbReference type="Pfam" id="PF01564">
    <property type="entry name" value="Spermine_synth"/>
    <property type="match status" value="1"/>
</dbReference>
<dbReference type="SUPFAM" id="SSF53335">
    <property type="entry name" value="S-adenosyl-L-methionine-dependent methyltransferases"/>
    <property type="match status" value="1"/>
</dbReference>
<dbReference type="PROSITE" id="PS01330">
    <property type="entry name" value="PABS_1"/>
    <property type="match status" value="1"/>
</dbReference>
<dbReference type="PROSITE" id="PS51006">
    <property type="entry name" value="PABS_2"/>
    <property type="match status" value="1"/>
</dbReference>
<reference key="1">
    <citation type="journal article" date="2003" name="Nature">
        <title>The genome sequence of Bacillus anthracis Ames and comparison to closely related bacteria.</title>
        <authorList>
            <person name="Read T.D."/>
            <person name="Peterson S.N."/>
            <person name="Tourasse N.J."/>
            <person name="Baillie L.W."/>
            <person name="Paulsen I.T."/>
            <person name="Nelson K.E."/>
            <person name="Tettelin H."/>
            <person name="Fouts D.E."/>
            <person name="Eisen J.A."/>
            <person name="Gill S.R."/>
            <person name="Holtzapple E.K."/>
            <person name="Okstad O.A."/>
            <person name="Helgason E."/>
            <person name="Rilstone J."/>
            <person name="Wu M."/>
            <person name="Kolonay J.F."/>
            <person name="Beanan M.J."/>
            <person name="Dodson R.J."/>
            <person name="Brinkac L.M."/>
            <person name="Gwinn M.L."/>
            <person name="DeBoy R.T."/>
            <person name="Madpu R."/>
            <person name="Daugherty S.C."/>
            <person name="Durkin A.S."/>
            <person name="Haft D.H."/>
            <person name="Nelson W.C."/>
            <person name="Peterson J.D."/>
            <person name="Pop M."/>
            <person name="Khouri H.M."/>
            <person name="Radune D."/>
            <person name="Benton J.L."/>
            <person name="Mahamoud Y."/>
            <person name="Jiang L."/>
            <person name="Hance I.R."/>
            <person name="Weidman J.F."/>
            <person name="Berry K.J."/>
            <person name="Plaut R.D."/>
            <person name="Wolf A.M."/>
            <person name="Watkins K.L."/>
            <person name="Nierman W.C."/>
            <person name="Hazen A."/>
            <person name="Cline R.T."/>
            <person name="Redmond C."/>
            <person name="Thwaite J.E."/>
            <person name="White O."/>
            <person name="Salzberg S.L."/>
            <person name="Thomason B."/>
            <person name="Friedlander A.M."/>
            <person name="Koehler T.M."/>
            <person name="Hanna P.C."/>
            <person name="Kolstoe A.-B."/>
            <person name="Fraser C.M."/>
        </authorList>
    </citation>
    <scope>NUCLEOTIDE SEQUENCE [LARGE SCALE GENOMIC DNA]</scope>
    <source>
        <strain>Ames / isolate Porton</strain>
    </source>
</reference>
<reference key="2">
    <citation type="journal article" date="2009" name="J. Bacteriol.">
        <title>The complete genome sequence of Bacillus anthracis Ames 'Ancestor'.</title>
        <authorList>
            <person name="Ravel J."/>
            <person name="Jiang L."/>
            <person name="Stanley S.T."/>
            <person name="Wilson M.R."/>
            <person name="Decker R.S."/>
            <person name="Read T.D."/>
            <person name="Worsham P."/>
            <person name="Keim P.S."/>
            <person name="Salzberg S.L."/>
            <person name="Fraser-Liggett C.M."/>
            <person name="Rasko D.A."/>
        </authorList>
    </citation>
    <scope>NUCLEOTIDE SEQUENCE [LARGE SCALE GENOMIC DNA]</scope>
    <source>
        <strain>Ames ancestor</strain>
    </source>
</reference>
<reference key="3">
    <citation type="submission" date="2004-01" db="EMBL/GenBank/DDBJ databases">
        <title>Complete genome sequence of Bacillus anthracis Sterne.</title>
        <authorList>
            <person name="Brettin T.S."/>
            <person name="Bruce D."/>
            <person name="Challacombe J.F."/>
            <person name="Gilna P."/>
            <person name="Han C."/>
            <person name="Hill K."/>
            <person name="Hitchcock P."/>
            <person name="Jackson P."/>
            <person name="Keim P."/>
            <person name="Longmire J."/>
            <person name="Lucas S."/>
            <person name="Okinaka R."/>
            <person name="Richardson P."/>
            <person name="Rubin E."/>
            <person name="Tice H."/>
        </authorList>
    </citation>
    <scope>NUCLEOTIDE SEQUENCE [LARGE SCALE GENOMIC DNA]</scope>
    <source>
        <strain>Sterne</strain>
    </source>
</reference>
<organism>
    <name type="scientific">Bacillus anthracis</name>
    <dbReference type="NCBI Taxonomy" id="1392"/>
    <lineage>
        <taxon>Bacteria</taxon>
        <taxon>Bacillati</taxon>
        <taxon>Bacillota</taxon>
        <taxon>Bacilli</taxon>
        <taxon>Bacillales</taxon>
        <taxon>Bacillaceae</taxon>
        <taxon>Bacillus</taxon>
        <taxon>Bacillus cereus group</taxon>
    </lineage>
</organism>
<name>SPEE1_BACAN</name>
<sequence length="275" mass="31144">MELWFTEKQTKHFGITARINRTLHTEQTEFQKLDMVETEEFGNMLILDGMVMTTEKDEFVYHEMVAHVPLFTHPNPENVLVVGGGDGGVIREVLKHPSVKKATLVEIDGKVIEYSKQYLPSIAGALDNERVEVKVGDGFLHIAESENEYDVIMVDSTEPVGPAVNLFTKGFYAGISKALKEDGIFVAQTDNPWFTPELITTVFKDVKEIFPITRLYTANIPTYPSGLWTFTIGSKKHDPLEVSEERFHEIETKYYTKELHNAAFALPKFVGDLIK</sequence>
<proteinExistence type="inferred from homology"/>
<keyword id="KW-0963">Cytoplasm</keyword>
<keyword id="KW-0620">Polyamine biosynthesis</keyword>
<keyword id="KW-1185">Reference proteome</keyword>
<keyword id="KW-0745">Spermidine biosynthesis</keyword>
<keyword id="KW-0808">Transferase</keyword>